<proteinExistence type="inferred from homology"/>
<dbReference type="EC" id="4.2.1.10" evidence="1"/>
<dbReference type="EMBL" id="CP000742">
    <property type="protein sequence ID" value="ABR54611.1"/>
    <property type="molecule type" value="Genomic_DNA"/>
</dbReference>
<dbReference type="RefSeq" id="WP_011972513.1">
    <property type="nucleotide sequence ID" value="NC_009634.1"/>
</dbReference>
<dbReference type="SMR" id="A6UQ39"/>
<dbReference type="STRING" id="406327.Mevan_0705"/>
<dbReference type="GeneID" id="5326178"/>
<dbReference type="KEGG" id="mvn:Mevan_0705"/>
<dbReference type="eggNOG" id="arCOG02097">
    <property type="taxonomic scope" value="Archaea"/>
</dbReference>
<dbReference type="HOGENOM" id="CLU_064444_2_1_2"/>
<dbReference type="OrthoDB" id="34329at2157"/>
<dbReference type="UniPathway" id="UPA00053">
    <property type="reaction ID" value="UER00086"/>
</dbReference>
<dbReference type="Proteomes" id="UP000001107">
    <property type="component" value="Chromosome"/>
</dbReference>
<dbReference type="GO" id="GO:0003855">
    <property type="term" value="F:3-dehydroquinate dehydratase activity"/>
    <property type="evidence" value="ECO:0007669"/>
    <property type="project" value="UniProtKB-UniRule"/>
</dbReference>
<dbReference type="GO" id="GO:0046279">
    <property type="term" value="P:3,4-dihydroxybenzoate biosynthetic process"/>
    <property type="evidence" value="ECO:0007669"/>
    <property type="project" value="TreeGrafter"/>
</dbReference>
<dbReference type="GO" id="GO:0008652">
    <property type="term" value="P:amino acid biosynthetic process"/>
    <property type="evidence" value="ECO:0007669"/>
    <property type="project" value="UniProtKB-KW"/>
</dbReference>
<dbReference type="GO" id="GO:0009073">
    <property type="term" value="P:aromatic amino acid family biosynthetic process"/>
    <property type="evidence" value="ECO:0007669"/>
    <property type="project" value="UniProtKB-KW"/>
</dbReference>
<dbReference type="GO" id="GO:0009423">
    <property type="term" value="P:chorismate biosynthetic process"/>
    <property type="evidence" value="ECO:0007669"/>
    <property type="project" value="UniProtKB-UniRule"/>
</dbReference>
<dbReference type="CDD" id="cd00502">
    <property type="entry name" value="DHQase_I"/>
    <property type="match status" value="1"/>
</dbReference>
<dbReference type="FunFam" id="3.20.20.70:FF:000047">
    <property type="entry name" value="3-dehydroquinate dehydratase"/>
    <property type="match status" value="1"/>
</dbReference>
<dbReference type="Gene3D" id="3.20.20.70">
    <property type="entry name" value="Aldolase class I"/>
    <property type="match status" value="1"/>
</dbReference>
<dbReference type="HAMAP" id="MF_00214">
    <property type="entry name" value="AroD"/>
    <property type="match status" value="1"/>
</dbReference>
<dbReference type="InterPro" id="IPR018508">
    <property type="entry name" value="3-dehydroquinate_DH_AS"/>
</dbReference>
<dbReference type="InterPro" id="IPR013785">
    <property type="entry name" value="Aldolase_TIM"/>
</dbReference>
<dbReference type="InterPro" id="IPR001381">
    <property type="entry name" value="DHquinase_I"/>
</dbReference>
<dbReference type="InterPro" id="IPR050146">
    <property type="entry name" value="Type-I_3-dehydroquinase"/>
</dbReference>
<dbReference type="NCBIfam" id="TIGR01093">
    <property type="entry name" value="aroD"/>
    <property type="match status" value="1"/>
</dbReference>
<dbReference type="PANTHER" id="PTHR43699">
    <property type="entry name" value="3-DEHYDROQUINATE DEHYDRATASE"/>
    <property type="match status" value="1"/>
</dbReference>
<dbReference type="PANTHER" id="PTHR43699:SF1">
    <property type="entry name" value="3-DEHYDROQUINATE DEHYDRATASE"/>
    <property type="match status" value="1"/>
</dbReference>
<dbReference type="Pfam" id="PF01487">
    <property type="entry name" value="DHquinase_I"/>
    <property type="match status" value="1"/>
</dbReference>
<dbReference type="SUPFAM" id="SSF51569">
    <property type="entry name" value="Aldolase"/>
    <property type="match status" value="1"/>
</dbReference>
<dbReference type="PROSITE" id="PS01028">
    <property type="entry name" value="DEHYDROQUINASE_I"/>
    <property type="match status" value="1"/>
</dbReference>
<name>AROD_METVS</name>
<reference key="1">
    <citation type="submission" date="2007-06" db="EMBL/GenBank/DDBJ databases">
        <title>Complete sequence of Methanococcus vannielii SB.</title>
        <authorList>
            <consortium name="US DOE Joint Genome Institute"/>
            <person name="Copeland A."/>
            <person name="Lucas S."/>
            <person name="Lapidus A."/>
            <person name="Barry K."/>
            <person name="Glavina del Rio T."/>
            <person name="Dalin E."/>
            <person name="Tice H."/>
            <person name="Pitluck S."/>
            <person name="Chain P."/>
            <person name="Malfatti S."/>
            <person name="Shin M."/>
            <person name="Vergez L."/>
            <person name="Schmutz J."/>
            <person name="Larimer F."/>
            <person name="Land M."/>
            <person name="Hauser L."/>
            <person name="Kyrpides N."/>
            <person name="Anderson I."/>
            <person name="Sieprawska-Lupa M."/>
            <person name="Whitman W.B."/>
            <person name="Richardson P."/>
        </authorList>
    </citation>
    <scope>NUCLEOTIDE SEQUENCE [LARGE SCALE GENOMIC DNA]</scope>
    <source>
        <strain>ATCC 35089 / DSM 1224 / JCM 13029 / OCM 148 / SB</strain>
    </source>
</reference>
<sequence length="218" mass="24583">MICIPIIDNTVEKALISAKEALKYGDIVEFRLDLLDNLTKFDIEKFAKIPSIITIRANWEGGAWKESNNKRIEFLKHAIKHGAKFIDVELKEEKNLELVTYRNEIGSKTKIIVSYHDFEKTPEINELIDVVEKELKIGDIAKFATFSNSKKDVLKILEVMNKYPGDIIAIGMGESGKLTRILGLRFGSILTFASMKGKSSAPGQIDVTKLKEILNLIE</sequence>
<feature type="chain" id="PRO_1000043176" description="3-dehydroquinate dehydratase">
    <location>
        <begin position="1"/>
        <end position="218"/>
    </location>
</feature>
<feature type="active site" description="Proton donor/acceptor" evidence="1">
    <location>
        <position position="116"/>
    </location>
</feature>
<feature type="active site" description="Schiff-base intermediate with substrate" evidence="1">
    <location>
        <position position="142"/>
    </location>
</feature>
<feature type="binding site" evidence="1">
    <location>
        <begin position="29"/>
        <end position="31"/>
    </location>
    <ligand>
        <name>3-dehydroquinate</name>
        <dbReference type="ChEBI" id="CHEBI:32364"/>
    </ligand>
</feature>
<feature type="binding site" evidence="1">
    <location>
        <position position="56"/>
    </location>
    <ligand>
        <name>3-dehydroquinate</name>
        <dbReference type="ChEBI" id="CHEBI:32364"/>
    </ligand>
</feature>
<feature type="binding site" evidence="1">
    <location>
        <position position="180"/>
    </location>
    <ligand>
        <name>3-dehydroquinate</name>
        <dbReference type="ChEBI" id="CHEBI:32364"/>
    </ligand>
</feature>
<feature type="binding site" evidence="1">
    <location>
        <position position="200"/>
    </location>
    <ligand>
        <name>3-dehydroquinate</name>
        <dbReference type="ChEBI" id="CHEBI:32364"/>
    </ligand>
</feature>
<feature type="binding site" evidence="1">
    <location>
        <position position="204"/>
    </location>
    <ligand>
        <name>3-dehydroquinate</name>
        <dbReference type="ChEBI" id="CHEBI:32364"/>
    </ligand>
</feature>
<comment type="function">
    <text evidence="1">Involved in the third step of the chorismate pathway, which leads to the biosynthesis of aromatic amino acids. Catalyzes the cis-dehydration of 3-dehydroquinate (DHQ) and introduces the first double bond of the aromatic ring to yield 3-dehydroshikimate.</text>
</comment>
<comment type="catalytic activity">
    <reaction evidence="1">
        <text>3-dehydroquinate = 3-dehydroshikimate + H2O</text>
        <dbReference type="Rhea" id="RHEA:21096"/>
        <dbReference type="ChEBI" id="CHEBI:15377"/>
        <dbReference type="ChEBI" id="CHEBI:16630"/>
        <dbReference type="ChEBI" id="CHEBI:32364"/>
        <dbReference type="EC" id="4.2.1.10"/>
    </reaction>
</comment>
<comment type="pathway">
    <text evidence="1">Metabolic intermediate biosynthesis; chorismate biosynthesis; chorismate from D-erythrose 4-phosphate and phosphoenolpyruvate: step 3/7.</text>
</comment>
<comment type="subunit">
    <text evidence="1">Homodimer.</text>
</comment>
<comment type="similarity">
    <text evidence="1">Belongs to the type-I 3-dehydroquinase family.</text>
</comment>
<gene>
    <name evidence="1" type="primary">aroD</name>
    <name type="ordered locus">Mevan_0705</name>
</gene>
<organism>
    <name type="scientific">Methanococcus vannielii (strain ATCC 35089 / DSM 1224 / JCM 13029 / OCM 148 / SB)</name>
    <dbReference type="NCBI Taxonomy" id="406327"/>
    <lineage>
        <taxon>Archaea</taxon>
        <taxon>Methanobacteriati</taxon>
        <taxon>Methanobacteriota</taxon>
        <taxon>Methanomada group</taxon>
        <taxon>Methanococci</taxon>
        <taxon>Methanococcales</taxon>
        <taxon>Methanococcaceae</taxon>
        <taxon>Methanococcus</taxon>
    </lineage>
</organism>
<protein>
    <recommendedName>
        <fullName evidence="1">3-dehydroquinate dehydratase</fullName>
        <shortName evidence="1">3-dehydroquinase</shortName>
        <ecNumber evidence="1">4.2.1.10</ecNumber>
    </recommendedName>
    <alternativeName>
        <fullName evidence="1">Type I DHQase</fullName>
    </alternativeName>
    <alternativeName>
        <fullName evidence="1">Type I dehydroquinase</fullName>
        <shortName evidence="1">DHQ1</shortName>
    </alternativeName>
</protein>
<accession>A6UQ39</accession>
<evidence type="ECO:0000255" key="1">
    <source>
        <dbReference type="HAMAP-Rule" id="MF_00214"/>
    </source>
</evidence>
<keyword id="KW-0028">Amino-acid biosynthesis</keyword>
<keyword id="KW-0057">Aromatic amino acid biosynthesis</keyword>
<keyword id="KW-0456">Lyase</keyword>
<keyword id="KW-0704">Schiff base</keyword>